<protein>
    <recommendedName>
        <fullName>Cytochrome c oxidase subunit 3</fullName>
        <ecNumber>7.1.1.9</ecNumber>
    </recommendedName>
    <alternativeName>
        <fullName>Cytochrome c oxidase polypeptide III</fullName>
    </alternativeName>
</protein>
<name>COX3_PANTR</name>
<sequence>MTHQSHAYHMVKPSPWPLTGALSALLMTSGLAMWFHFYSTTLLTLGLLTNTLTMYQWWRDVMREGTYQGHHTPPVQKGLRYGMILFITSEVFFFAGFFWAFYHSSLAPTPQLGGHWPPTGITPLNPLEVPLLNTSVLLASGVSITWAHHSLMENNRNQMIQALLITILLGLYFTLLQASEYFESPFTISDGIYGSTFFVATGFHGLHVIIGSTFLTICLIRQLMFHFTSKHHFGFQAAAWYWHFVDVVWLFLYVSIYWWGS</sequence>
<dbReference type="EC" id="7.1.1.9"/>
<dbReference type="EMBL" id="D38113">
    <property type="protein sequence ID" value="BAA85272.1"/>
    <property type="molecule type" value="Genomic_DNA"/>
</dbReference>
<dbReference type="SMR" id="Q9T9V9"/>
<dbReference type="FunCoup" id="Q9T9V9">
    <property type="interactions" value="222"/>
</dbReference>
<dbReference type="STRING" id="9598.ENSPTRP00000061404"/>
<dbReference type="PaxDb" id="9598-ENSPTRP00000061404"/>
<dbReference type="Ensembl" id="ENSPTRT00000076385.1">
    <property type="protein sequence ID" value="ENSPTRP00000061404.1"/>
    <property type="gene ID" value="ENSPTRG00000042661.1"/>
</dbReference>
<dbReference type="KEGG" id="ptr:807869"/>
<dbReference type="CTD" id="4514"/>
<dbReference type="VGNC" id="VGNC:11716">
    <property type="gene designation" value="MT-CO3"/>
</dbReference>
<dbReference type="eggNOG" id="KOG4664">
    <property type="taxonomic scope" value="Eukaryota"/>
</dbReference>
<dbReference type="GeneTree" id="ENSGT00390000013064"/>
<dbReference type="HOGENOM" id="CLU_044071_0_0_1"/>
<dbReference type="InParanoid" id="Q9T9V9"/>
<dbReference type="OMA" id="SIYWWGS"/>
<dbReference type="Proteomes" id="UP000002277">
    <property type="component" value="Mitochondrion"/>
</dbReference>
<dbReference type="Bgee" id="ENSPTRG00000042661">
    <property type="expression patterns" value="Expressed in superior frontal gyrus and 20 other cell types or tissues"/>
</dbReference>
<dbReference type="GO" id="GO:0005743">
    <property type="term" value="C:mitochondrial inner membrane"/>
    <property type="evidence" value="ECO:0007669"/>
    <property type="project" value="UniProtKB-SubCell"/>
</dbReference>
<dbReference type="GO" id="GO:0005739">
    <property type="term" value="C:mitochondrion"/>
    <property type="evidence" value="ECO:0000318"/>
    <property type="project" value="GO_Central"/>
</dbReference>
<dbReference type="GO" id="GO:0045277">
    <property type="term" value="C:respiratory chain complex IV"/>
    <property type="evidence" value="ECO:0000250"/>
    <property type="project" value="UniProtKB"/>
</dbReference>
<dbReference type="GO" id="GO:0004129">
    <property type="term" value="F:cytochrome-c oxidase activity"/>
    <property type="evidence" value="ECO:0007669"/>
    <property type="project" value="UniProtKB-EC"/>
</dbReference>
<dbReference type="GO" id="GO:0006123">
    <property type="term" value="P:mitochondrial electron transport, cytochrome c to oxygen"/>
    <property type="evidence" value="ECO:0000318"/>
    <property type="project" value="GO_Central"/>
</dbReference>
<dbReference type="GO" id="GO:0008535">
    <property type="term" value="P:respiratory chain complex IV assembly"/>
    <property type="evidence" value="ECO:0000250"/>
    <property type="project" value="UniProtKB"/>
</dbReference>
<dbReference type="CDD" id="cd01665">
    <property type="entry name" value="Cyt_c_Oxidase_III"/>
    <property type="match status" value="1"/>
</dbReference>
<dbReference type="FunFam" id="1.10.287.70:FF:000048">
    <property type="entry name" value="Cytochrome c oxidase subunit 3"/>
    <property type="match status" value="1"/>
</dbReference>
<dbReference type="FunFam" id="1.20.120.80:FF:000002">
    <property type="entry name" value="Cytochrome c oxidase subunit 3"/>
    <property type="match status" value="1"/>
</dbReference>
<dbReference type="Gene3D" id="1.10.287.70">
    <property type="match status" value="1"/>
</dbReference>
<dbReference type="Gene3D" id="1.20.120.80">
    <property type="entry name" value="Cytochrome c oxidase, subunit III, four-helix bundle"/>
    <property type="match status" value="1"/>
</dbReference>
<dbReference type="InterPro" id="IPR024791">
    <property type="entry name" value="Cyt_c/ubiquinol_Oxase_su3"/>
</dbReference>
<dbReference type="InterPro" id="IPR033945">
    <property type="entry name" value="Cyt_c_oxase_su3_dom"/>
</dbReference>
<dbReference type="InterPro" id="IPR000298">
    <property type="entry name" value="Cyt_c_oxidase-like_su3"/>
</dbReference>
<dbReference type="InterPro" id="IPR035973">
    <property type="entry name" value="Cyt_c_oxidase_su3-like_sf"/>
</dbReference>
<dbReference type="InterPro" id="IPR013833">
    <property type="entry name" value="Cyt_c_oxidase_su3_a-hlx"/>
</dbReference>
<dbReference type="PANTHER" id="PTHR11403:SF7">
    <property type="entry name" value="CYTOCHROME C OXIDASE SUBUNIT 3"/>
    <property type="match status" value="1"/>
</dbReference>
<dbReference type="PANTHER" id="PTHR11403">
    <property type="entry name" value="CYTOCHROME C OXIDASE SUBUNIT III"/>
    <property type="match status" value="1"/>
</dbReference>
<dbReference type="Pfam" id="PF00510">
    <property type="entry name" value="COX3"/>
    <property type="match status" value="1"/>
</dbReference>
<dbReference type="SUPFAM" id="SSF81452">
    <property type="entry name" value="Cytochrome c oxidase subunit III-like"/>
    <property type="match status" value="1"/>
</dbReference>
<dbReference type="PROSITE" id="PS50253">
    <property type="entry name" value="COX3"/>
    <property type="match status" value="1"/>
</dbReference>
<geneLocation type="mitochondrion"/>
<keyword id="KW-0472">Membrane</keyword>
<keyword id="KW-0496">Mitochondrion</keyword>
<keyword id="KW-0999">Mitochondrion inner membrane</keyword>
<keyword id="KW-1185">Reference proteome</keyword>
<keyword id="KW-1278">Translocase</keyword>
<keyword id="KW-0812">Transmembrane</keyword>
<keyword id="KW-1133">Transmembrane helix</keyword>
<accession>Q9T9V9</accession>
<comment type="function">
    <text evidence="2">Component of the cytochrome c oxidase, the last enzyme in the mitochondrial electron transport chain which drives oxidative phosphorylation. The respiratory chain contains 3 multisubunit complexes succinate dehydrogenase (complex II, CII), ubiquinol-cytochrome c oxidoreductase (cytochrome b-c1 complex, complex III, CIII) and cytochrome c oxidase (complex IV, CIV), that cooperate to transfer electrons derived from NADH and succinate to molecular oxygen, creating an electrochemical gradient over the inner membrane that drives transmembrane transport and the ATP synthase. Cytochrome c oxidase is the component of the respiratory chain that catalyzes the reduction of oxygen to water. Electrons originating from reduced cytochrome c in the intermembrane space (IMS) are transferred via the dinuclear copper A center (CU(A)) of subunit 2 and heme A of subunit 1 to the active site in subunit 1, a binuclear center (BNC) formed by heme A3 and copper B (CU(B)). The BNC reduces molecular oxygen to 2 water molecules using 4 electrons from cytochrome c in the IMS and 4 protons from the mitochondrial matrix.</text>
</comment>
<comment type="catalytic activity">
    <reaction evidence="2">
        <text>4 Fe(II)-[cytochrome c] + O2 + 8 H(+)(in) = 4 Fe(III)-[cytochrome c] + 2 H2O + 4 H(+)(out)</text>
        <dbReference type="Rhea" id="RHEA:11436"/>
        <dbReference type="Rhea" id="RHEA-COMP:10350"/>
        <dbReference type="Rhea" id="RHEA-COMP:14399"/>
        <dbReference type="ChEBI" id="CHEBI:15377"/>
        <dbReference type="ChEBI" id="CHEBI:15378"/>
        <dbReference type="ChEBI" id="CHEBI:15379"/>
        <dbReference type="ChEBI" id="CHEBI:29033"/>
        <dbReference type="ChEBI" id="CHEBI:29034"/>
        <dbReference type="EC" id="7.1.1.9"/>
    </reaction>
    <physiologicalReaction direction="left-to-right" evidence="2">
        <dbReference type="Rhea" id="RHEA:11437"/>
    </physiologicalReaction>
</comment>
<comment type="subunit">
    <text evidence="1">Component of the cytochrome c oxidase (complex IV, CIV), a multisubunit enzyme composed of 14 subunits. The complex is composed of a catalytic core of 3 subunits MT-CO1, MT-CO2 and MT-CO3, encoded in the mitochondrial DNA, and 11 supernumerary subunits COX4I, COX5A, COX5B, COX6A, COX6B, COX6C, COX7A, COX7B, COX7C, COX8 and NDUFA4, which are encoded in the nuclear genome. The complex exists as a monomer or a dimer and forms supercomplexes (SCs) in the inner mitochondrial membrane with NADH-ubiquinone oxidoreductase (complex I, CI) and ubiquinol-cytochrome c oxidoreductase (cytochrome b-c1 complex, complex III, CIII), resulting in different assemblies (supercomplex SCI(1)III(2)IV(1) and megacomplex MCI(2)III(2)IV(2)).</text>
</comment>
<comment type="subcellular location">
    <subcellularLocation>
        <location evidence="1">Mitochondrion inner membrane</location>
        <topology evidence="1">Multi-pass membrane protein</topology>
    </subcellularLocation>
</comment>
<comment type="similarity">
    <text evidence="3">Belongs to the cytochrome c oxidase subunit 3 family.</text>
</comment>
<organism>
    <name type="scientific">Pan troglodytes</name>
    <name type="common">Chimpanzee</name>
    <dbReference type="NCBI Taxonomy" id="9598"/>
    <lineage>
        <taxon>Eukaryota</taxon>
        <taxon>Metazoa</taxon>
        <taxon>Chordata</taxon>
        <taxon>Craniata</taxon>
        <taxon>Vertebrata</taxon>
        <taxon>Euteleostomi</taxon>
        <taxon>Mammalia</taxon>
        <taxon>Eutheria</taxon>
        <taxon>Euarchontoglires</taxon>
        <taxon>Primates</taxon>
        <taxon>Haplorrhini</taxon>
        <taxon>Catarrhini</taxon>
        <taxon>Hominidae</taxon>
        <taxon>Pan</taxon>
    </lineage>
</organism>
<reference key="1">
    <citation type="journal article" date="1995" name="Proc. Natl. Acad. Sci. U.S.A.">
        <title>Recent African origin of modern humans revealed by complete sequences of hominoid mitochondrial DNAs.</title>
        <authorList>
            <person name="Horai S."/>
            <person name="Hayasaka K."/>
            <person name="Kondo R."/>
            <person name="Tsugane K."/>
            <person name="Takahata N."/>
        </authorList>
    </citation>
    <scope>NUCLEOTIDE SEQUENCE [GENOMIC DNA]</scope>
</reference>
<feature type="chain" id="PRO_0000183824" description="Cytochrome c oxidase subunit 3">
    <location>
        <begin position="1"/>
        <end position="261"/>
    </location>
</feature>
<feature type="topological domain" description="Mitochondrial matrix" evidence="1">
    <location>
        <begin position="1"/>
        <end position="15"/>
    </location>
</feature>
<feature type="transmembrane region" description="Helical; Name=I" evidence="1">
    <location>
        <begin position="16"/>
        <end position="34"/>
    </location>
</feature>
<feature type="topological domain" description="Mitochondrial intermembrane" evidence="1">
    <location>
        <begin position="35"/>
        <end position="40"/>
    </location>
</feature>
<feature type="transmembrane region" description="Helical; Name=II" evidence="1">
    <location>
        <begin position="41"/>
        <end position="66"/>
    </location>
</feature>
<feature type="topological domain" description="Mitochondrial matrix" evidence="1">
    <location>
        <begin position="67"/>
        <end position="72"/>
    </location>
</feature>
<feature type="transmembrane region" description="Helical; Name=III" evidence="1">
    <location>
        <begin position="73"/>
        <end position="105"/>
    </location>
</feature>
<feature type="topological domain" description="Mitochondrial intermembrane" evidence="1">
    <location>
        <begin position="106"/>
        <end position="128"/>
    </location>
</feature>
<feature type="transmembrane region" description="Helical; Name=IV" evidence="1">
    <location>
        <begin position="129"/>
        <end position="152"/>
    </location>
</feature>
<feature type="topological domain" description="Mitochondrial matrix" evidence="1">
    <location>
        <begin position="153"/>
        <end position="155"/>
    </location>
</feature>
<feature type="transmembrane region" description="Helical; Name=V" evidence="1">
    <location>
        <begin position="156"/>
        <end position="183"/>
    </location>
</feature>
<feature type="topological domain" description="Mitochondrial intermembrane" evidence="1">
    <location>
        <begin position="184"/>
        <end position="190"/>
    </location>
</feature>
<feature type="transmembrane region" description="Helical; Name=VI" evidence="1">
    <location>
        <begin position="191"/>
        <end position="223"/>
    </location>
</feature>
<feature type="topological domain" description="Mitochondrial matrix" evidence="1">
    <location>
        <begin position="224"/>
        <end position="232"/>
    </location>
</feature>
<feature type="transmembrane region" description="Helical; Name=VII" evidence="1">
    <location>
        <begin position="233"/>
        <end position="256"/>
    </location>
</feature>
<feature type="topological domain" description="Mitochondrial intermembrane" evidence="1">
    <location>
        <begin position="257"/>
        <end position="261"/>
    </location>
</feature>
<evidence type="ECO:0000250" key="1">
    <source>
        <dbReference type="UniProtKB" id="P00415"/>
    </source>
</evidence>
<evidence type="ECO:0000250" key="2">
    <source>
        <dbReference type="UniProtKB" id="P00420"/>
    </source>
</evidence>
<evidence type="ECO:0000305" key="3"/>
<gene>
    <name type="primary">MT-CO3</name>
    <name type="synonym">COIII</name>
    <name type="synonym">COXIII</name>
    <name type="synonym">MTCO3</name>
</gene>
<proteinExistence type="inferred from homology"/>